<organism>
    <name type="scientific">Gluconobacter oxydans (strain 621H)</name>
    <name type="common">Gluconobacter suboxydans</name>
    <dbReference type="NCBI Taxonomy" id="290633"/>
    <lineage>
        <taxon>Bacteria</taxon>
        <taxon>Pseudomonadati</taxon>
        <taxon>Pseudomonadota</taxon>
        <taxon>Alphaproteobacteria</taxon>
        <taxon>Acetobacterales</taxon>
        <taxon>Acetobacteraceae</taxon>
        <taxon>Gluconobacter</taxon>
    </lineage>
</organism>
<gene>
    <name evidence="1" type="primary">mnmG</name>
    <name evidence="1" type="synonym">gidA</name>
    <name type="ordered locus">GOX1065</name>
</gene>
<comment type="function">
    <text evidence="1">NAD-binding protein involved in the addition of a carboxymethylaminomethyl (cmnm) group at the wobble position (U34) of certain tRNAs, forming tRNA-cmnm(5)s(2)U34.</text>
</comment>
<comment type="cofactor">
    <cofactor evidence="1">
        <name>FAD</name>
        <dbReference type="ChEBI" id="CHEBI:57692"/>
    </cofactor>
</comment>
<comment type="subunit">
    <text evidence="1">Homodimer. Heterotetramer of two MnmE and two MnmG subunits.</text>
</comment>
<comment type="subcellular location">
    <subcellularLocation>
        <location evidence="1">Cytoplasm</location>
    </subcellularLocation>
</comment>
<comment type="similarity">
    <text evidence="1">Belongs to the MnmG family.</text>
</comment>
<sequence length="618" mass="66349">MSDFDVIVIGGGHAGCEAAAASARFGARTLLLTHRLETIGAMSCNPAIGGIGKGHLVREIDALDGLMGKAADRAGIHFKLLNRSKGPAVHGPRAQADRSLYRAAIQDLLAATPNLTILEGAAGDLIEENGRITGVICEDGREFRCGAVVLTTGTFLRGVIHVGHTQTEAGRIGEAPAKRLGERLYALGLQMGRLKTGTPPRLARDSIDWDNLPADPGDAEPEAFSPMTTAIINPQVVCRISHTTAETHRIINENLHRSAMYGGAIAGRGPRYCPSIEDKVVRFAERTSHQVFLEPEALPGNPGGDLVYPNGISTSLPADVQAAMIATMPGLENARIVTAGYAVEYDYVDPRELLPSLQLRRLPGLYLAGQINGTTGYEEAGAQGLLAGLNAARATAGNEPLTLDRSDAYLGVMIDDLTLHGISEPYRMFTSRAEYRLTLRADNADLRLTPKGIAAGCVLPEREAAFTAQKAELDAAMARAAETTFLPQTLRDVGFEVSLDGRRRTVLDVLASNGDHTKLDTLAPWFAELPLRVRRHVETEARYDGYLHRQDREIRQLASESAIALPADLDYTAIGGLSSEMRERFSQARPTSFAAAQRVRGVTPAALVALLAHVRTLS</sequence>
<feature type="chain" id="PRO_0000117107" description="tRNA uridine 5-carboxymethylaminomethyl modification enzyme MnmG">
    <location>
        <begin position="1"/>
        <end position="618"/>
    </location>
</feature>
<feature type="binding site" evidence="1">
    <location>
        <begin position="10"/>
        <end position="15"/>
    </location>
    <ligand>
        <name>FAD</name>
        <dbReference type="ChEBI" id="CHEBI:57692"/>
    </ligand>
</feature>
<feature type="binding site" evidence="1">
    <location>
        <begin position="269"/>
        <end position="283"/>
    </location>
    <ligand>
        <name>NAD(+)</name>
        <dbReference type="ChEBI" id="CHEBI:57540"/>
    </ligand>
</feature>
<reference key="1">
    <citation type="journal article" date="2005" name="Nat. Biotechnol.">
        <title>Complete genome sequence of the acetic acid bacterium Gluconobacter oxydans.</title>
        <authorList>
            <person name="Prust C."/>
            <person name="Hoffmeister M."/>
            <person name="Liesegang H."/>
            <person name="Wiezer A."/>
            <person name="Fricke W.F."/>
            <person name="Ehrenreich A."/>
            <person name="Gottschalk G."/>
            <person name="Deppenmeier U."/>
        </authorList>
    </citation>
    <scope>NUCLEOTIDE SEQUENCE [LARGE SCALE GENOMIC DNA]</scope>
    <source>
        <strain>621H</strain>
    </source>
</reference>
<keyword id="KW-0963">Cytoplasm</keyword>
<keyword id="KW-0274">FAD</keyword>
<keyword id="KW-0285">Flavoprotein</keyword>
<keyword id="KW-0520">NAD</keyword>
<keyword id="KW-1185">Reference proteome</keyword>
<keyword id="KW-0819">tRNA processing</keyword>
<name>MNMG_GLUOX</name>
<evidence type="ECO:0000255" key="1">
    <source>
        <dbReference type="HAMAP-Rule" id="MF_00129"/>
    </source>
</evidence>
<proteinExistence type="inferred from homology"/>
<dbReference type="EMBL" id="CP000009">
    <property type="protein sequence ID" value="AAW60834.1"/>
    <property type="molecule type" value="Genomic_DNA"/>
</dbReference>
<dbReference type="RefSeq" id="WP_011252626.1">
    <property type="nucleotide sequence ID" value="NC_006677.1"/>
</dbReference>
<dbReference type="SMR" id="Q5FS12"/>
<dbReference type="STRING" id="290633.GOX1065"/>
<dbReference type="KEGG" id="gox:GOX1065"/>
<dbReference type="eggNOG" id="COG0445">
    <property type="taxonomic scope" value="Bacteria"/>
</dbReference>
<dbReference type="HOGENOM" id="CLU_007831_2_2_5"/>
<dbReference type="Proteomes" id="UP000006375">
    <property type="component" value="Chromosome"/>
</dbReference>
<dbReference type="GO" id="GO:0005829">
    <property type="term" value="C:cytosol"/>
    <property type="evidence" value="ECO:0007669"/>
    <property type="project" value="TreeGrafter"/>
</dbReference>
<dbReference type="GO" id="GO:0050660">
    <property type="term" value="F:flavin adenine dinucleotide binding"/>
    <property type="evidence" value="ECO:0007669"/>
    <property type="project" value="UniProtKB-UniRule"/>
</dbReference>
<dbReference type="GO" id="GO:0030488">
    <property type="term" value="P:tRNA methylation"/>
    <property type="evidence" value="ECO:0007669"/>
    <property type="project" value="TreeGrafter"/>
</dbReference>
<dbReference type="GO" id="GO:0002098">
    <property type="term" value="P:tRNA wobble uridine modification"/>
    <property type="evidence" value="ECO:0007669"/>
    <property type="project" value="InterPro"/>
</dbReference>
<dbReference type="FunFam" id="3.50.50.60:FF:000082">
    <property type="entry name" value="protein MTO1 homolog, mitochondrial isoform X1"/>
    <property type="match status" value="1"/>
</dbReference>
<dbReference type="FunFam" id="1.10.150.570:FF:000001">
    <property type="entry name" value="tRNA uridine 5-carboxymethylaminomethyl modification enzyme MnmG"/>
    <property type="match status" value="1"/>
</dbReference>
<dbReference type="FunFam" id="3.50.50.60:FF:000002">
    <property type="entry name" value="tRNA uridine 5-carboxymethylaminomethyl modification enzyme MnmG"/>
    <property type="match status" value="1"/>
</dbReference>
<dbReference type="Gene3D" id="3.50.50.60">
    <property type="entry name" value="FAD/NAD(P)-binding domain"/>
    <property type="match status" value="2"/>
</dbReference>
<dbReference type="Gene3D" id="1.10.150.570">
    <property type="entry name" value="GidA associated domain, C-terminal subdomain"/>
    <property type="match status" value="1"/>
</dbReference>
<dbReference type="HAMAP" id="MF_00129">
    <property type="entry name" value="MnmG_GidA"/>
    <property type="match status" value="1"/>
</dbReference>
<dbReference type="InterPro" id="IPR036188">
    <property type="entry name" value="FAD/NAD-bd_sf"/>
</dbReference>
<dbReference type="InterPro" id="IPR049312">
    <property type="entry name" value="GIDA_C_N"/>
</dbReference>
<dbReference type="InterPro" id="IPR004416">
    <property type="entry name" value="MnmG"/>
</dbReference>
<dbReference type="InterPro" id="IPR002218">
    <property type="entry name" value="MnmG-rel"/>
</dbReference>
<dbReference type="InterPro" id="IPR020595">
    <property type="entry name" value="MnmG-rel_CS"/>
</dbReference>
<dbReference type="InterPro" id="IPR026904">
    <property type="entry name" value="MnmG_C"/>
</dbReference>
<dbReference type="InterPro" id="IPR047001">
    <property type="entry name" value="MnmG_C_subdom"/>
</dbReference>
<dbReference type="InterPro" id="IPR044920">
    <property type="entry name" value="MnmG_C_subdom_sf"/>
</dbReference>
<dbReference type="InterPro" id="IPR040131">
    <property type="entry name" value="MnmG_N"/>
</dbReference>
<dbReference type="NCBIfam" id="TIGR00136">
    <property type="entry name" value="mnmG_gidA"/>
    <property type="match status" value="1"/>
</dbReference>
<dbReference type="PANTHER" id="PTHR11806">
    <property type="entry name" value="GLUCOSE INHIBITED DIVISION PROTEIN A"/>
    <property type="match status" value="1"/>
</dbReference>
<dbReference type="PANTHER" id="PTHR11806:SF0">
    <property type="entry name" value="PROTEIN MTO1 HOMOLOG, MITOCHONDRIAL"/>
    <property type="match status" value="1"/>
</dbReference>
<dbReference type="Pfam" id="PF01134">
    <property type="entry name" value="GIDA"/>
    <property type="match status" value="1"/>
</dbReference>
<dbReference type="Pfam" id="PF21680">
    <property type="entry name" value="GIDA_C_1st"/>
    <property type="match status" value="1"/>
</dbReference>
<dbReference type="Pfam" id="PF13932">
    <property type="entry name" value="SAM_GIDA_C"/>
    <property type="match status" value="1"/>
</dbReference>
<dbReference type="SMART" id="SM01228">
    <property type="entry name" value="GIDA_assoc_3"/>
    <property type="match status" value="1"/>
</dbReference>
<dbReference type="SUPFAM" id="SSF51905">
    <property type="entry name" value="FAD/NAD(P)-binding domain"/>
    <property type="match status" value="1"/>
</dbReference>
<dbReference type="PROSITE" id="PS01280">
    <property type="entry name" value="GIDA_1"/>
    <property type="match status" value="1"/>
</dbReference>
<dbReference type="PROSITE" id="PS01281">
    <property type="entry name" value="GIDA_2"/>
    <property type="match status" value="1"/>
</dbReference>
<accession>Q5FS12</accession>
<protein>
    <recommendedName>
        <fullName evidence="1">tRNA uridine 5-carboxymethylaminomethyl modification enzyme MnmG</fullName>
    </recommendedName>
    <alternativeName>
        <fullName evidence="1">Glucose-inhibited division protein A</fullName>
    </alternativeName>
</protein>